<sequence>MAATKSEPLDLDLTAEEARAEYARLSDAILEADRLYYQEDAPEISDAEYDRLRRRLEDIEARFPDLAGTGAASTSVGAKPSEKFAKVRHAVPMLSLGNAFDDAEVAEFVARVRRFLGWSDDTPLAFTAEPKIDGLSLSLRYVNGRLDTAATRGDGEVGENVTANARTVQDIPAVLAGAGWPEICEVRGEVYLSHADFAAINARQEAAGKPLFANPRNAAAGSLRQLDPAITASRPLRFFAYAWGELSAPIAETQTGVLEQFATWGLPVNPRTETFTDTAAMLAHYRRIEADRAGLGYDIDGVVYKVDDLALQKRLGFVSRSPRWALAHKFAAQEATTVVEDIVINVGRTGSLNPLAKLRPVTVGGVVVSNATLHNEGYVKGVGADGEPIRDGRDIRVGDTVTVVRAGDVIPKVMDVDLTKRPADSRPYAFPESCPACGSRAVRAINPRTGRPDAVRRCTGGLICPAQGVERMKHFVSRNGFDIEGFGETYIEVLFEAGLVRQPADLFRLDFEELKAAIVARREALSAERRAESGTAEPPKKAAKKKGDEDDKAIKNLLAAVEARRAVPMNRLLFALGIPQIGEATAKALAKRFADMPTLIAAIREAAAAQPGPDWVELTAVPRVGGTTRDRLLDLGFPEDDAAPAKERARLSAVQRENLLAHYGDVDAVRAAIAQAAAQRPGDAYRVFADDGEIGPVATDALLLFFSEPHNADAVTALLDAVAVQPMERAAAASTFAGKTVVFTGALEKMTRNEAKAVAERLGAKVSGSVSAKTDLVVAGPGAGSKLKDAQKHGVRVVSEDDWLAMVAQG</sequence>
<keyword id="KW-0227">DNA damage</keyword>
<keyword id="KW-0234">DNA repair</keyword>
<keyword id="KW-0235">DNA replication</keyword>
<keyword id="KW-0436">Ligase</keyword>
<keyword id="KW-0460">Magnesium</keyword>
<keyword id="KW-0464">Manganese</keyword>
<keyword id="KW-0479">Metal-binding</keyword>
<keyword id="KW-0520">NAD</keyword>
<keyword id="KW-0862">Zinc</keyword>
<protein>
    <recommendedName>
        <fullName evidence="1">DNA ligase</fullName>
        <ecNumber evidence="1">6.5.1.2</ecNumber>
    </recommendedName>
    <alternativeName>
        <fullName evidence="1">Polydeoxyribonucleotide synthase [NAD(+)]</fullName>
    </alternativeName>
</protein>
<accession>B1M575</accession>
<gene>
    <name evidence="1" type="primary">ligA</name>
    <name type="ordered locus">Mrad2831_0011</name>
</gene>
<feature type="chain" id="PRO_0000380419" description="DNA ligase">
    <location>
        <begin position="1"/>
        <end position="810"/>
    </location>
</feature>
<feature type="domain" description="BRCT" evidence="1">
    <location>
        <begin position="731"/>
        <end position="810"/>
    </location>
</feature>
<feature type="region of interest" description="Disordered" evidence="2">
    <location>
        <begin position="528"/>
        <end position="548"/>
    </location>
</feature>
<feature type="active site" description="N6-AMP-lysine intermediate" evidence="1">
    <location>
        <position position="131"/>
    </location>
</feature>
<feature type="binding site" evidence="1">
    <location>
        <begin position="46"/>
        <end position="50"/>
    </location>
    <ligand>
        <name>NAD(+)</name>
        <dbReference type="ChEBI" id="CHEBI:57540"/>
    </ligand>
</feature>
<feature type="binding site" evidence="1">
    <location>
        <begin position="95"/>
        <end position="96"/>
    </location>
    <ligand>
        <name>NAD(+)</name>
        <dbReference type="ChEBI" id="CHEBI:57540"/>
    </ligand>
</feature>
<feature type="binding site" evidence="1">
    <location>
        <position position="129"/>
    </location>
    <ligand>
        <name>NAD(+)</name>
        <dbReference type="ChEBI" id="CHEBI:57540"/>
    </ligand>
</feature>
<feature type="binding site" evidence="1">
    <location>
        <position position="152"/>
    </location>
    <ligand>
        <name>NAD(+)</name>
        <dbReference type="ChEBI" id="CHEBI:57540"/>
    </ligand>
</feature>
<feature type="binding site" evidence="1">
    <location>
        <position position="189"/>
    </location>
    <ligand>
        <name>NAD(+)</name>
        <dbReference type="ChEBI" id="CHEBI:57540"/>
    </ligand>
</feature>
<feature type="binding site" evidence="1">
    <location>
        <position position="305"/>
    </location>
    <ligand>
        <name>NAD(+)</name>
        <dbReference type="ChEBI" id="CHEBI:57540"/>
    </ligand>
</feature>
<feature type="binding site" evidence="1">
    <location>
        <position position="329"/>
    </location>
    <ligand>
        <name>NAD(+)</name>
        <dbReference type="ChEBI" id="CHEBI:57540"/>
    </ligand>
</feature>
<feature type="binding site" evidence="1">
    <location>
        <position position="434"/>
    </location>
    <ligand>
        <name>Zn(2+)</name>
        <dbReference type="ChEBI" id="CHEBI:29105"/>
    </ligand>
</feature>
<feature type="binding site" evidence="1">
    <location>
        <position position="437"/>
    </location>
    <ligand>
        <name>Zn(2+)</name>
        <dbReference type="ChEBI" id="CHEBI:29105"/>
    </ligand>
</feature>
<feature type="binding site" evidence="1">
    <location>
        <position position="458"/>
    </location>
    <ligand>
        <name>Zn(2+)</name>
        <dbReference type="ChEBI" id="CHEBI:29105"/>
    </ligand>
</feature>
<feature type="binding site" evidence="1">
    <location>
        <position position="464"/>
    </location>
    <ligand>
        <name>Zn(2+)</name>
        <dbReference type="ChEBI" id="CHEBI:29105"/>
    </ligand>
</feature>
<dbReference type="EC" id="6.5.1.2" evidence="1"/>
<dbReference type="EMBL" id="CP001001">
    <property type="protein sequence ID" value="ACB22038.1"/>
    <property type="molecule type" value="Genomic_DNA"/>
</dbReference>
<dbReference type="RefSeq" id="WP_012317039.1">
    <property type="nucleotide sequence ID" value="NC_010505.1"/>
</dbReference>
<dbReference type="SMR" id="B1M575"/>
<dbReference type="STRING" id="426355.Mrad2831_0011"/>
<dbReference type="GeneID" id="6136309"/>
<dbReference type="KEGG" id="mrd:Mrad2831_0011"/>
<dbReference type="PATRIC" id="fig|426355.14.peg.34"/>
<dbReference type="eggNOG" id="COG0272">
    <property type="taxonomic scope" value="Bacteria"/>
</dbReference>
<dbReference type="HOGENOM" id="CLU_007764_2_1_5"/>
<dbReference type="OrthoDB" id="9759736at2"/>
<dbReference type="Proteomes" id="UP000006589">
    <property type="component" value="Chromosome"/>
</dbReference>
<dbReference type="GO" id="GO:0005829">
    <property type="term" value="C:cytosol"/>
    <property type="evidence" value="ECO:0007669"/>
    <property type="project" value="TreeGrafter"/>
</dbReference>
<dbReference type="GO" id="GO:0003911">
    <property type="term" value="F:DNA ligase (NAD+) activity"/>
    <property type="evidence" value="ECO:0007669"/>
    <property type="project" value="UniProtKB-UniRule"/>
</dbReference>
<dbReference type="GO" id="GO:0046872">
    <property type="term" value="F:metal ion binding"/>
    <property type="evidence" value="ECO:0007669"/>
    <property type="project" value="UniProtKB-KW"/>
</dbReference>
<dbReference type="GO" id="GO:0006281">
    <property type="term" value="P:DNA repair"/>
    <property type="evidence" value="ECO:0007669"/>
    <property type="project" value="UniProtKB-KW"/>
</dbReference>
<dbReference type="GO" id="GO:0006260">
    <property type="term" value="P:DNA replication"/>
    <property type="evidence" value="ECO:0007669"/>
    <property type="project" value="UniProtKB-KW"/>
</dbReference>
<dbReference type="CDD" id="cd17748">
    <property type="entry name" value="BRCT_DNA_ligase_like"/>
    <property type="match status" value="1"/>
</dbReference>
<dbReference type="CDD" id="cd00114">
    <property type="entry name" value="LIGANc"/>
    <property type="match status" value="1"/>
</dbReference>
<dbReference type="FunFam" id="3.30.470.30:FF:000001">
    <property type="entry name" value="DNA ligase"/>
    <property type="match status" value="1"/>
</dbReference>
<dbReference type="Gene3D" id="6.20.10.30">
    <property type="match status" value="1"/>
</dbReference>
<dbReference type="Gene3D" id="1.10.150.20">
    <property type="entry name" value="5' to 3' exonuclease, C-terminal subdomain"/>
    <property type="match status" value="2"/>
</dbReference>
<dbReference type="Gene3D" id="3.40.50.10190">
    <property type="entry name" value="BRCT domain"/>
    <property type="match status" value="1"/>
</dbReference>
<dbReference type="Gene3D" id="3.30.470.30">
    <property type="entry name" value="DNA ligase/mRNA capping enzyme"/>
    <property type="match status" value="1"/>
</dbReference>
<dbReference type="Gene3D" id="1.10.287.610">
    <property type="entry name" value="Helix hairpin bin"/>
    <property type="match status" value="1"/>
</dbReference>
<dbReference type="Gene3D" id="2.40.50.140">
    <property type="entry name" value="Nucleic acid-binding proteins"/>
    <property type="match status" value="1"/>
</dbReference>
<dbReference type="HAMAP" id="MF_01588">
    <property type="entry name" value="DNA_ligase_A"/>
    <property type="match status" value="1"/>
</dbReference>
<dbReference type="InterPro" id="IPR001357">
    <property type="entry name" value="BRCT_dom"/>
</dbReference>
<dbReference type="InterPro" id="IPR036420">
    <property type="entry name" value="BRCT_dom_sf"/>
</dbReference>
<dbReference type="InterPro" id="IPR041663">
    <property type="entry name" value="DisA/LigA_HHH"/>
</dbReference>
<dbReference type="InterPro" id="IPR001679">
    <property type="entry name" value="DNA_ligase"/>
</dbReference>
<dbReference type="InterPro" id="IPR018239">
    <property type="entry name" value="DNA_ligase_AS"/>
</dbReference>
<dbReference type="InterPro" id="IPR033136">
    <property type="entry name" value="DNA_ligase_CS"/>
</dbReference>
<dbReference type="InterPro" id="IPR013839">
    <property type="entry name" value="DNAligase_adenylation"/>
</dbReference>
<dbReference type="InterPro" id="IPR013840">
    <property type="entry name" value="DNAligase_N"/>
</dbReference>
<dbReference type="InterPro" id="IPR012340">
    <property type="entry name" value="NA-bd_OB-fold"/>
</dbReference>
<dbReference type="InterPro" id="IPR004150">
    <property type="entry name" value="NAD_DNA_ligase_OB"/>
</dbReference>
<dbReference type="InterPro" id="IPR010994">
    <property type="entry name" value="RuvA_2-like"/>
</dbReference>
<dbReference type="NCBIfam" id="TIGR00575">
    <property type="entry name" value="dnlj"/>
    <property type="match status" value="1"/>
</dbReference>
<dbReference type="NCBIfam" id="NF005932">
    <property type="entry name" value="PRK07956.1"/>
    <property type="match status" value="1"/>
</dbReference>
<dbReference type="PANTHER" id="PTHR23389">
    <property type="entry name" value="CHROMOSOME TRANSMISSION FIDELITY FACTOR 18"/>
    <property type="match status" value="1"/>
</dbReference>
<dbReference type="PANTHER" id="PTHR23389:SF9">
    <property type="entry name" value="DNA LIGASE"/>
    <property type="match status" value="1"/>
</dbReference>
<dbReference type="Pfam" id="PF00533">
    <property type="entry name" value="BRCT"/>
    <property type="match status" value="1"/>
</dbReference>
<dbReference type="Pfam" id="PF01653">
    <property type="entry name" value="DNA_ligase_aden"/>
    <property type="match status" value="1"/>
</dbReference>
<dbReference type="Pfam" id="PF03120">
    <property type="entry name" value="DNA_ligase_OB"/>
    <property type="match status" value="1"/>
</dbReference>
<dbReference type="Pfam" id="PF12826">
    <property type="entry name" value="HHH_2"/>
    <property type="match status" value="1"/>
</dbReference>
<dbReference type="PIRSF" id="PIRSF001604">
    <property type="entry name" value="LigA"/>
    <property type="match status" value="1"/>
</dbReference>
<dbReference type="SMART" id="SM00292">
    <property type="entry name" value="BRCT"/>
    <property type="match status" value="1"/>
</dbReference>
<dbReference type="SMART" id="SM00532">
    <property type="entry name" value="LIGANc"/>
    <property type="match status" value="1"/>
</dbReference>
<dbReference type="SUPFAM" id="SSF52113">
    <property type="entry name" value="BRCT domain"/>
    <property type="match status" value="1"/>
</dbReference>
<dbReference type="SUPFAM" id="SSF56091">
    <property type="entry name" value="DNA ligase/mRNA capping enzyme, catalytic domain"/>
    <property type="match status" value="1"/>
</dbReference>
<dbReference type="SUPFAM" id="SSF50249">
    <property type="entry name" value="Nucleic acid-binding proteins"/>
    <property type="match status" value="1"/>
</dbReference>
<dbReference type="SUPFAM" id="SSF47781">
    <property type="entry name" value="RuvA domain 2-like"/>
    <property type="match status" value="1"/>
</dbReference>
<dbReference type="PROSITE" id="PS50172">
    <property type="entry name" value="BRCT"/>
    <property type="match status" value="1"/>
</dbReference>
<dbReference type="PROSITE" id="PS01055">
    <property type="entry name" value="DNA_LIGASE_N1"/>
    <property type="match status" value="1"/>
</dbReference>
<dbReference type="PROSITE" id="PS01056">
    <property type="entry name" value="DNA_LIGASE_N2"/>
    <property type="match status" value="1"/>
</dbReference>
<name>DNLJ_METRJ</name>
<proteinExistence type="inferred from homology"/>
<comment type="function">
    <text evidence="1">DNA ligase that catalyzes the formation of phosphodiester linkages between 5'-phosphoryl and 3'-hydroxyl groups in double-stranded DNA using NAD as a coenzyme and as the energy source for the reaction. It is essential for DNA replication and repair of damaged DNA.</text>
</comment>
<comment type="catalytic activity">
    <reaction evidence="1">
        <text>NAD(+) + (deoxyribonucleotide)n-3'-hydroxyl + 5'-phospho-(deoxyribonucleotide)m = (deoxyribonucleotide)n+m + AMP + beta-nicotinamide D-nucleotide.</text>
        <dbReference type="EC" id="6.5.1.2"/>
    </reaction>
</comment>
<comment type="cofactor">
    <cofactor evidence="1">
        <name>Mg(2+)</name>
        <dbReference type="ChEBI" id="CHEBI:18420"/>
    </cofactor>
    <cofactor evidence="1">
        <name>Mn(2+)</name>
        <dbReference type="ChEBI" id="CHEBI:29035"/>
    </cofactor>
</comment>
<comment type="similarity">
    <text evidence="1">Belongs to the NAD-dependent DNA ligase family. LigA subfamily.</text>
</comment>
<reference key="1">
    <citation type="submission" date="2008-03" db="EMBL/GenBank/DDBJ databases">
        <title>Complete sequence of chromosome of Methylobacterium radiotolerans JCM 2831.</title>
        <authorList>
            <consortium name="US DOE Joint Genome Institute"/>
            <person name="Copeland A."/>
            <person name="Lucas S."/>
            <person name="Lapidus A."/>
            <person name="Glavina del Rio T."/>
            <person name="Dalin E."/>
            <person name="Tice H."/>
            <person name="Bruce D."/>
            <person name="Goodwin L."/>
            <person name="Pitluck S."/>
            <person name="Kiss H."/>
            <person name="Brettin T."/>
            <person name="Detter J.C."/>
            <person name="Han C."/>
            <person name="Kuske C.R."/>
            <person name="Schmutz J."/>
            <person name="Larimer F."/>
            <person name="Land M."/>
            <person name="Hauser L."/>
            <person name="Kyrpides N."/>
            <person name="Mikhailova N."/>
            <person name="Marx C.J."/>
            <person name="Richardson P."/>
        </authorList>
    </citation>
    <scope>NUCLEOTIDE SEQUENCE [LARGE SCALE GENOMIC DNA]</scope>
    <source>
        <strain>ATCC 27329 / DSM 1819 / JCM 2831 / NBRC 15690 / NCIMB 10815 / 0-1</strain>
    </source>
</reference>
<evidence type="ECO:0000255" key="1">
    <source>
        <dbReference type="HAMAP-Rule" id="MF_01588"/>
    </source>
</evidence>
<evidence type="ECO:0000256" key="2">
    <source>
        <dbReference type="SAM" id="MobiDB-lite"/>
    </source>
</evidence>
<organism>
    <name type="scientific">Methylobacterium radiotolerans (strain ATCC 27329 / DSM 1819 / JCM 2831 / NBRC 15690 / NCIMB 10815 / 0-1)</name>
    <dbReference type="NCBI Taxonomy" id="426355"/>
    <lineage>
        <taxon>Bacteria</taxon>
        <taxon>Pseudomonadati</taxon>
        <taxon>Pseudomonadota</taxon>
        <taxon>Alphaproteobacteria</taxon>
        <taxon>Hyphomicrobiales</taxon>
        <taxon>Methylobacteriaceae</taxon>
        <taxon>Methylobacterium</taxon>
    </lineage>
</organism>